<protein>
    <recommendedName>
        <fullName>Histone H3.3</fullName>
    </recommendedName>
</protein>
<accession>P84245</accession>
<accession>P06351</accession>
<accession>P33155</accession>
<accession>Q5RJM5</accession>
<accession>Q9V3W4</accession>
<reference key="1">
    <citation type="journal article" date="1994" name="Neurochem. Res.">
        <title>H1(0) and H3.3B mRNA levels in developing rat brain.</title>
        <authorList>
            <person name="Castiglia D."/>
            <person name="Cestelli A."/>
            <person name="Scaturro M."/>
            <person name="Nastasi T."/>
            <person name="Di Liegro I."/>
        </authorList>
    </citation>
    <scope>NUCLEOTIDE SEQUENCE [MRNA]</scope>
    <scope>DEVELOPMENTAL STAGE</scope>
    <source>
        <strain>Sprague-Dawley</strain>
        <tissue>Embryonic brain</tissue>
    </source>
</reference>
<reference key="2">
    <citation type="journal article" date="2004" name="Genome Res.">
        <title>The status, quality, and expansion of the NIH full-length cDNA project: the Mammalian Gene Collection (MGC).</title>
        <authorList>
            <consortium name="The MGC Project Team"/>
        </authorList>
    </citation>
    <scope>NUCLEOTIDE SEQUENCE [LARGE SCALE MRNA]</scope>
    <source>
        <tissue>Brain</tissue>
        <tissue>Pituitary</tissue>
        <tissue>Testis</tissue>
    </source>
</reference>
<reference key="3">
    <citation type="journal article" date="2003" name="Nucleic Acids Res.">
        <title>Novel mitosis-specific phosphorylation of histone H3 at Thr11 mediated by Dlk/ZIP kinase.</title>
        <authorList>
            <person name="Preuss U."/>
            <person name="Landsberg G."/>
            <person name="Scheidtmann K.H."/>
        </authorList>
    </citation>
    <scope>PHOSPHORYLATION AT SER-11 AND THR-12</scope>
</reference>
<reference key="4">
    <citation type="journal article" date="1998" name="J. Biol. Chem.">
        <title>Ubiquitination of histone H3 in elongating spermatids of rat testes.</title>
        <authorList>
            <person name="Chen H.Y."/>
            <person name="Sun J.-M."/>
            <person name="Zhang Y."/>
            <person name="Davie J.R."/>
            <person name="Meistrich M.L."/>
        </authorList>
    </citation>
    <scope>UBIQUITINATION</scope>
</reference>
<reference key="5">
    <citation type="journal article" date="2009" name="Proteomics">
        <title>Mass spectrometry-compatible silver staining of histones resolved on acetic acid-urea-Triton PAGE.</title>
        <authorList>
            <person name="Pramod K.S."/>
            <person name="Bharat K."/>
            <person name="Sanjay G."/>
        </authorList>
    </citation>
    <scope>IDENTIFICATION BY MASS SPECTROMETRY</scope>
    <scope>ACETYLATION AT LYS-37</scope>
</reference>
<reference key="6">
    <citation type="journal article" date="2020" name="Science">
        <title>Dopaminylation of histone H3 in ventral tegmental area regulates cocaine seeking.</title>
        <authorList>
            <person name="Lepack A.E."/>
            <person name="Werner C.T."/>
            <person name="Stewart A.F."/>
            <person name="Fulton S.L."/>
            <person name="Zhong P."/>
            <person name="Farrelly L.A."/>
            <person name="Smith A.C.W."/>
            <person name="Ramakrishnan A."/>
            <person name="Lyu Y."/>
            <person name="Bastle R.M."/>
            <person name="Martin J.A."/>
            <person name="Mitra S."/>
            <person name="O'Connor R.M."/>
            <person name="Wang Z.J."/>
            <person name="Molina H."/>
            <person name="Turecki G."/>
            <person name="Shen L."/>
            <person name="Yan Z."/>
            <person name="Calipari E.S."/>
            <person name="Dietz D.M."/>
            <person name="Kenny P.J."/>
            <person name="Maze I."/>
        </authorList>
    </citation>
    <scope>DOPAMINYLATION AT GLN-6</scope>
    <scope>MUTAGENESIS OF GLN-6</scope>
</reference>
<dbReference type="EMBL" id="X73683">
    <property type="protein sequence ID" value="CAA52035.1"/>
    <property type="molecule type" value="mRNA"/>
</dbReference>
<dbReference type="EMBL" id="BC063159">
    <property type="protein sequence ID" value="AAH63159.1"/>
    <property type="molecule type" value="mRNA"/>
</dbReference>
<dbReference type="EMBL" id="BC078759">
    <property type="protein sequence ID" value="AAH78759.1"/>
    <property type="molecule type" value="mRNA"/>
</dbReference>
<dbReference type="EMBL" id="BC086580">
    <property type="protein sequence ID" value="AAH86580.1"/>
    <property type="molecule type" value="mRNA"/>
</dbReference>
<dbReference type="EMBL" id="BC087725">
    <property type="protein sequence ID" value="AAH87725.1"/>
    <property type="molecule type" value="mRNA"/>
</dbReference>
<dbReference type="PIR" id="S34185">
    <property type="entry name" value="S34185"/>
</dbReference>
<dbReference type="RefSeq" id="NP_446437.1">
    <property type="nucleotide sequence ID" value="NM_053985.2"/>
</dbReference>
<dbReference type="RefSeq" id="XP_002728089.1">
    <property type="nucleotide sequence ID" value="XM_002728043.3"/>
</dbReference>
<dbReference type="RefSeq" id="XP_003752732.1">
    <property type="nucleotide sequence ID" value="XM_003752684.4"/>
</dbReference>
<dbReference type="SMR" id="P84245"/>
<dbReference type="BioGRID" id="250653">
    <property type="interactions" value="4"/>
</dbReference>
<dbReference type="CORUM" id="P84245"/>
<dbReference type="FunCoup" id="P84245">
    <property type="interactions" value="4548"/>
</dbReference>
<dbReference type="IntAct" id="P84245">
    <property type="interactions" value="1"/>
</dbReference>
<dbReference type="MINT" id="P84245"/>
<dbReference type="STRING" id="10116.ENSRNOP00000004329"/>
<dbReference type="iPTMnet" id="P84245"/>
<dbReference type="SwissPalm" id="P84245"/>
<dbReference type="jPOST" id="P84245"/>
<dbReference type="PaxDb" id="10116-ENSRNOP00000004329"/>
<dbReference type="Ensembl" id="ENSRNOT00000004329.8">
    <property type="protein sequence ID" value="ENSRNOP00000004329.4"/>
    <property type="gene ID" value="ENSRNOG00000003220.8"/>
</dbReference>
<dbReference type="Ensembl" id="ENSRNOT00000050223.4">
    <property type="protein sequence ID" value="ENSRNOP00000040434.3"/>
    <property type="gene ID" value="ENSRNOG00000006532.6"/>
</dbReference>
<dbReference type="GeneID" id="117056"/>
<dbReference type="KEGG" id="rno:117056"/>
<dbReference type="AGR" id="RGD:2319910"/>
<dbReference type="AGR" id="RGD:621095"/>
<dbReference type="CTD" id="15081"/>
<dbReference type="RGD" id="621095">
    <property type="gene designation" value="H3f3b"/>
</dbReference>
<dbReference type="eggNOG" id="KOG1745">
    <property type="taxonomic scope" value="Eukaryota"/>
</dbReference>
<dbReference type="GeneTree" id="ENSGT01110000267215"/>
<dbReference type="HOGENOM" id="CLU_078295_4_0_1"/>
<dbReference type="InParanoid" id="P84245"/>
<dbReference type="OMA" id="HDINEGY"/>
<dbReference type="OrthoDB" id="9609993at2759"/>
<dbReference type="PhylomeDB" id="P84245"/>
<dbReference type="TreeFam" id="TF314241"/>
<dbReference type="Reactome" id="R-RNO-212300">
    <property type="pathway name" value="PRC2 methylates histones and DNA"/>
</dbReference>
<dbReference type="Reactome" id="R-RNO-2559580">
    <property type="pathway name" value="Oxidative Stress Induced Senescence"/>
</dbReference>
<dbReference type="Reactome" id="R-RNO-2559582">
    <property type="pathway name" value="Senescence-Associated Secretory Phenotype (SASP)"/>
</dbReference>
<dbReference type="Reactome" id="R-RNO-427359">
    <property type="pathway name" value="SIRT1 negatively regulates rRNA expression"/>
</dbReference>
<dbReference type="Reactome" id="R-RNO-427413">
    <property type="pathway name" value="NoRC negatively regulates rRNA expression"/>
</dbReference>
<dbReference type="Reactome" id="R-RNO-5250924">
    <property type="pathway name" value="B-WICH complex positively regulates rRNA expression"/>
</dbReference>
<dbReference type="Reactome" id="R-RNO-5578749">
    <property type="pathway name" value="Transcriptional regulation by small RNAs"/>
</dbReference>
<dbReference type="Reactome" id="R-RNO-5625886">
    <property type="pathway name" value="Activated PKN1 stimulates transcription of AR (androgen receptor) regulated genes KLK2 and KLK3"/>
</dbReference>
<dbReference type="Reactome" id="R-RNO-68616">
    <property type="pathway name" value="Assembly of the ORC complex at the origin of replication"/>
</dbReference>
<dbReference type="Reactome" id="R-RNO-73728">
    <property type="pathway name" value="RNA Polymerase I Promoter Opening"/>
</dbReference>
<dbReference type="Reactome" id="R-RNO-73772">
    <property type="pathway name" value="RNA Polymerase I Promoter Escape"/>
</dbReference>
<dbReference type="Reactome" id="R-RNO-8936459">
    <property type="pathway name" value="RUNX1 regulates genes involved in megakaryocyte differentiation and platelet function"/>
</dbReference>
<dbReference type="Reactome" id="R-RNO-9018519">
    <property type="pathway name" value="Estrogen-dependent gene expression"/>
</dbReference>
<dbReference type="Reactome" id="R-RNO-983231">
    <property type="pathway name" value="Factors involved in megakaryocyte development and platelet production"/>
</dbReference>
<dbReference type="Reactome" id="R-RNO-9841922">
    <property type="pathway name" value="MLL4 and MLL3 complexes regulate expression of PPARG target genes in adipogenesis and hepatic steatosis"/>
</dbReference>
<dbReference type="Reactome" id="R-RNO-9843940">
    <property type="pathway name" value="Regulation of endogenous retroelements by KRAB-ZFP proteins"/>
</dbReference>
<dbReference type="Reactome" id="R-RNO-9843970">
    <property type="pathway name" value="Regulation of endogenous retroelements by the Human Silencing Hub (HUSH) complex"/>
</dbReference>
<dbReference type="PRO" id="PR:P84245"/>
<dbReference type="Proteomes" id="UP000002494">
    <property type="component" value="Chromosome 10"/>
</dbReference>
<dbReference type="Proteomes" id="UP000002494">
    <property type="component" value="Chromosome 13"/>
</dbReference>
<dbReference type="Bgee" id="ENSRNOG00000003220">
    <property type="expression patterns" value="Expressed in thymus and 18 other cell types or tissues"/>
</dbReference>
<dbReference type="ExpressionAtlas" id="P84245">
    <property type="expression patterns" value="baseline and differential"/>
</dbReference>
<dbReference type="GO" id="GO:0000781">
    <property type="term" value="C:chromosome, telomeric region"/>
    <property type="evidence" value="ECO:0000266"/>
    <property type="project" value="RGD"/>
</dbReference>
<dbReference type="GO" id="GO:0000786">
    <property type="term" value="C:nucleosome"/>
    <property type="evidence" value="ECO:0000266"/>
    <property type="project" value="RGD"/>
</dbReference>
<dbReference type="GO" id="GO:0005634">
    <property type="term" value="C:nucleus"/>
    <property type="evidence" value="ECO:0000266"/>
    <property type="project" value="RGD"/>
</dbReference>
<dbReference type="GO" id="GO:0032991">
    <property type="term" value="C:protein-containing complex"/>
    <property type="evidence" value="ECO:0000266"/>
    <property type="project" value="RGD"/>
</dbReference>
<dbReference type="GO" id="GO:0031492">
    <property type="term" value="F:nucleosomal DNA binding"/>
    <property type="evidence" value="ECO:0000266"/>
    <property type="project" value="RGD"/>
</dbReference>
<dbReference type="GO" id="GO:0046982">
    <property type="term" value="F:protein heterodimerization activity"/>
    <property type="evidence" value="ECO:0007669"/>
    <property type="project" value="InterPro"/>
</dbReference>
<dbReference type="GO" id="GO:0000978">
    <property type="term" value="F:RNA polymerase II cis-regulatory region sequence-specific DNA binding"/>
    <property type="evidence" value="ECO:0000266"/>
    <property type="project" value="RGD"/>
</dbReference>
<dbReference type="GO" id="GO:0000979">
    <property type="term" value="F:RNA polymerase II core promoter sequence-specific DNA binding"/>
    <property type="evidence" value="ECO:0000266"/>
    <property type="project" value="RGD"/>
</dbReference>
<dbReference type="GO" id="GO:0030527">
    <property type="term" value="F:structural constituent of chromatin"/>
    <property type="evidence" value="ECO:0000266"/>
    <property type="project" value="RGD"/>
</dbReference>
<dbReference type="GO" id="GO:0008283">
    <property type="term" value="P:cell population proliferation"/>
    <property type="evidence" value="ECO:0000266"/>
    <property type="project" value="RGD"/>
</dbReference>
<dbReference type="GO" id="GO:0007566">
    <property type="term" value="P:embryo implantation"/>
    <property type="evidence" value="ECO:0000266"/>
    <property type="project" value="RGD"/>
</dbReference>
<dbReference type="GO" id="GO:0008584">
    <property type="term" value="P:male gonad development"/>
    <property type="evidence" value="ECO:0000266"/>
    <property type="project" value="RGD"/>
</dbReference>
<dbReference type="GO" id="GO:0035264">
    <property type="term" value="P:multicellular organism growth"/>
    <property type="evidence" value="ECO:0000266"/>
    <property type="project" value="RGD"/>
</dbReference>
<dbReference type="GO" id="GO:0042692">
    <property type="term" value="P:muscle cell differentiation"/>
    <property type="evidence" value="ECO:0000266"/>
    <property type="project" value="RGD"/>
</dbReference>
<dbReference type="GO" id="GO:1902340">
    <property type="term" value="P:negative regulation of chromosome condensation"/>
    <property type="evidence" value="ECO:0000266"/>
    <property type="project" value="RGD"/>
</dbReference>
<dbReference type="GO" id="GO:0006334">
    <property type="term" value="P:nucleosome assembly"/>
    <property type="evidence" value="ECO:0000266"/>
    <property type="project" value="RGD"/>
</dbReference>
<dbReference type="GO" id="GO:0006997">
    <property type="term" value="P:nucleus organization"/>
    <property type="evidence" value="ECO:0000266"/>
    <property type="project" value="RGD"/>
</dbReference>
<dbReference type="GO" id="GO:0048477">
    <property type="term" value="P:oogenesis"/>
    <property type="evidence" value="ECO:0000266"/>
    <property type="project" value="RGD"/>
</dbReference>
<dbReference type="GO" id="GO:0001649">
    <property type="term" value="P:osteoblast differentiation"/>
    <property type="evidence" value="ECO:0000266"/>
    <property type="project" value="RGD"/>
</dbReference>
<dbReference type="GO" id="GO:0031508">
    <property type="term" value="P:pericentric heterochromatin formation"/>
    <property type="evidence" value="ECO:0000266"/>
    <property type="project" value="RGD"/>
</dbReference>
<dbReference type="GO" id="GO:0030307">
    <property type="term" value="P:positive regulation of cell growth"/>
    <property type="evidence" value="ECO:0000266"/>
    <property type="project" value="RGD"/>
</dbReference>
<dbReference type="GO" id="GO:0090230">
    <property type="term" value="P:regulation of centromere complex assembly"/>
    <property type="evidence" value="ECO:0000266"/>
    <property type="project" value="RGD"/>
</dbReference>
<dbReference type="GO" id="GO:0009725">
    <property type="term" value="P:response to hormone"/>
    <property type="evidence" value="ECO:0000270"/>
    <property type="project" value="RGD"/>
</dbReference>
<dbReference type="GO" id="GO:0007338">
    <property type="term" value="P:single fertilization"/>
    <property type="evidence" value="ECO:0000266"/>
    <property type="project" value="RGD"/>
</dbReference>
<dbReference type="GO" id="GO:0007286">
    <property type="term" value="P:spermatid development"/>
    <property type="evidence" value="ECO:0000266"/>
    <property type="project" value="RGD"/>
</dbReference>
<dbReference type="GO" id="GO:0007283">
    <property type="term" value="P:spermatogenesis"/>
    <property type="evidence" value="ECO:0000266"/>
    <property type="project" value="RGD"/>
</dbReference>
<dbReference type="GO" id="GO:0031509">
    <property type="term" value="P:subtelomeric heterochromatin formation"/>
    <property type="evidence" value="ECO:0000266"/>
    <property type="project" value="RGD"/>
</dbReference>
<dbReference type="CDD" id="cd22911">
    <property type="entry name" value="HFD_H3"/>
    <property type="match status" value="1"/>
</dbReference>
<dbReference type="FunFam" id="1.10.20.10:FF:000078">
    <property type="entry name" value="Histone H3"/>
    <property type="match status" value="1"/>
</dbReference>
<dbReference type="FunFam" id="1.10.20.10:FF:000044">
    <property type="entry name" value="Histone H3.3"/>
    <property type="match status" value="1"/>
</dbReference>
<dbReference type="Gene3D" id="1.10.20.10">
    <property type="entry name" value="Histone, subunit A"/>
    <property type="match status" value="1"/>
</dbReference>
<dbReference type="InterPro" id="IPR009072">
    <property type="entry name" value="Histone-fold"/>
</dbReference>
<dbReference type="InterPro" id="IPR007125">
    <property type="entry name" value="Histone_H2A/H2B/H3"/>
</dbReference>
<dbReference type="InterPro" id="IPR000164">
    <property type="entry name" value="Histone_H3/CENP-A"/>
</dbReference>
<dbReference type="PANTHER" id="PTHR11426">
    <property type="entry name" value="HISTONE H3"/>
    <property type="match status" value="1"/>
</dbReference>
<dbReference type="Pfam" id="PF00125">
    <property type="entry name" value="Histone"/>
    <property type="match status" value="1"/>
</dbReference>
<dbReference type="PRINTS" id="PR00622">
    <property type="entry name" value="HISTONEH3"/>
</dbReference>
<dbReference type="SMART" id="SM00428">
    <property type="entry name" value="H3"/>
    <property type="match status" value="1"/>
</dbReference>
<dbReference type="SUPFAM" id="SSF47113">
    <property type="entry name" value="Histone-fold"/>
    <property type="match status" value="1"/>
</dbReference>
<dbReference type="PROSITE" id="PS00322">
    <property type="entry name" value="HISTONE_H3_1"/>
    <property type="match status" value="1"/>
</dbReference>
<dbReference type="PROSITE" id="PS00959">
    <property type="entry name" value="HISTONE_H3_2"/>
    <property type="match status" value="1"/>
</dbReference>
<gene>
    <name evidence="4" type="primary">H3-3b</name>
    <name type="synonym">H3.3b</name>
    <name evidence="15" type="synonym">H3f3b</name>
</gene>
<name>H33_RAT</name>
<feature type="initiator methionine" description="Removed" evidence="14">
    <location>
        <position position="1"/>
    </location>
</feature>
<feature type="chain" id="PRO_0000221254" description="Histone H3.3">
    <location>
        <begin position="2"/>
        <end position="136"/>
    </location>
</feature>
<feature type="region of interest" description="Disordered" evidence="8">
    <location>
        <begin position="1"/>
        <end position="43"/>
    </location>
</feature>
<feature type="site" description="Interaction with ZMYND11" evidence="4">
    <location>
        <position position="32"/>
    </location>
</feature>
<feature type="modified residue" description="Asymmetric dimethylarginine; by PRMT6; alternate" evidence="4">
    <location>
        <position position="3"/>
    </location>
</feature>
<feature type="modified residue" description="Citrulline; alternate" evidence="4">
    <location>
        <position position="3"/>
    </location>
</feature>
<feature type="modified residue" description="Phosphothreonine; by HASPIN and VRK1" evidence="4">
    <location>
        <position position="4"/>
    </location>
</feature>
<feature type="modified residue" description="Allysine; alternate" evidence="4">
    <location>
        <position position="5"/>
    </location>
</feature>
<feature type="modified residue" description="N6,N6,N6-trimethyllysine; alternate" evidence="4">
    <location>
        <position position="5"/>
    </location>
</feature>
<feature type="modified residue" description="N6,N6-dimethyllysine; alternate" evidence="4">
    <location>
        <position position="5"/>
    </location>
</feature>
<feature type="modified residue" description="N6-(2-hydroxyisobutyryl)lysine; alternate" evidence="2">
    <location>
        <position position="5"/>
    </location>
</feature>
<feature type="modified residue" description="N6-(beta-hydroxybutyryl)lysine; alternate" evidence="3">
    <location>
        <position position="5"/>
    </location>
</feature>
<feature type="modified residue" description="N6-acetyllysine; alternate" evidence="4">
    <location>
        <position position="5"/>
    </location>
</feature>
<feature type="modified residue" description="N6-crotonyllysine; alternate" evidence="4">
    <location>
        <position position="5"/>
    </location>
</feature>
<feature type="modified residue" description="N6-methyllysine; alternate" evidence="4">
    <location>
        <position position="5"/>
    </location>
</feature>
<feature type="modified residue" description="5-glutamyl dopamine; alternate" evidence="11">
    <location>
        <position position="6"/>
    </location>
</feature>
<feature type="modified residue" description="5-glutamyl serotonin; alternate" evidence="4">
    <location>
        <position position="6"/>
    </location>
</feature>
<feature type="modified residue" description="Phosphothreonine; by PKC" evidence="4">
    <location>
        <position position="7"/>
    </location>
</feature>
<feature type="modified residue" description="Citrulline; alternate" evidence="4">
    <location>
        <position position="9"/>
    </location>
</feature>
<feature type="modified residue" description="Symmetric dimethylarginine; by PRMT5; alternate" evidence="5">
    <location>
        <position position="9"/>
    </location>
</feature>
<feature type="modified residue" description="N6,N6,N6-trimethyllysine; alternate" evidence="4">
    <location>
        <position position="10"/>
    </location>
</feature>
<feature type="modified residue" description="N6,N6-dimethyllysine; alternate" evidence="4">
    <location>
        <position position="10"/>
    </location>
</feature>
<feature type="modified residue" description="N6-(2-hydroxyisobutyryl)lysine; alternate" evidence="2">
    <location>
        <position position="10"/>
    </location>
</feature>
<feature type="modified residue" description="N6-(beta-hydroxybutyryl)lysine; alternate" evidence="3">
    <location>
        <position position="10"/>
    </location>
</feature>
<feature type="modified residue" description="N6-acetyllysine; alternate" evidence="4">
    <location>
        <position position="10"/>
    </location>
</feature>
<feature type="modified residue" description="N6-crotonyllysine; alternate" evidence="4">
    <location>
        <position position="10"/>
    </location>
</feature>
<feature type="modified residue" description="N6-lactoyllysine; alternate" evidence="4">
    <location>
        <position position="10"/>
    </location>
</feature>
<feature type="modified residue" description="N6-methyllysine; alternate" evidence="4">
    <location>
        <position position="10"/>
    </location>
</feature>
<feature type="modified residue" description="ADP-ribosylserine; alternate" evidence="2">
    <location>
        <position position="11"/>
    </location>
</feature>
<feature type="modified residue" description="Phosphoserine; alternate; by AURKB, AURKC, RPS6KA3, RPS6KA4 and RPS6KA5" evidence="9">
    <location>
        <position position="11"/>
    </location>
</feature>
<feature type="modified residue" description="Phosphothreonine; by PKC" evidence="9">
    <location>
        <position position="12"/>
    </location>
</feature>
<feature type="modified residue" description="N6-(2-hydroxyisobutyryl)lysine; alternate" evidence="2">
    <location>
        <position position="15"/>
    </location>
</feature>
<feature type="modified residue" description="N6-(beta-hydroxybutyryl)lysine; alternate" evidence="3">
    <location>
        <position position="15"/>
    </location>
</feature>
<feature type="modified residue" description="N6-acetyllysine; alternate" evidence="4">
    <location>
        <position position="15"/>
    </location>
</feature>
<feature type="modified residue" description="N6-glutaryllysine; alternate" evidence="4">
    <location>
        <position position="15"/>
    </location>
</feature>
<feature type="modified residue" description="N6-lactoyllysine; alternate" evidence="5">
    <location>
        <position position="15"/>
    </location>
</feature>
<feature type="modified residue" description="N6-succinyllysine; alternate" evidence="4">
    <location>
        <position position="15"/>
    </location>
</feature>
<feature type="modified residue" description="Asymmetric dimethylarginine; by CARM1; alternate" evidence="4">
    <location>
        <position position="18"/>
    </location>
</feature>
<feature type="modified residue" description="Citrulline; alternate" evidence="4">
    <location>
        <position position="18"/>
    </location>
</feature>
<feature type="modified residue" description="N6-(2-hydroxyisobutyryl)lysine; alternate" evidence="2">
    <location>
        <position position="19"/>
    </location>
</feature>
<feature type="modified residue" description="N6-(beta-hydroxybutyryl)lysine; alternate" evidence="3">
    <location>
        <position position="19"/>
    </location>
</feature>
<feature type="modified residue" description="N6-acetyllysine; alternate" evidence="4">
    <location>
        <position position="19"/>
    </location>
</feature>
<feature type="modified residue" description="N6-butyryllysine; alternate" evidence="3">
    <location>
        <position position="19"/>
    </location>
</feature>
<feature type="modified residue" description="N6-crotonyllysine; alternate" evidence="4">
    <location>
        <position position="19"/>
    </location>
</feature>
<feature type="modified residue" description="N6-glutaryllysine; alternate" evidence="4">
    <location>
        <position position="19"/>
    </location>
</feature>
<feature type="modified residue" description="N6-lactoyllysine; alternate" evidence="4">
    <location>
        <position position="19"/>
    </location>
</feature>
<feature type="modified residue" description="N6-methyllysine; alternate" evidence="4">
    <location>
        <position position="19"/>
    </location>
</feature>
<feature type="modified residue" description="N6-(2-hydroxyisobutyryl)lysine; alternate" evidence="2">
    <location>
        <position position="24"/>
    </location>
</feature>
<feature type="modified residue" description="N6-(beta-hydroxybutyryl)lysine; alternate" evidence="3">
    <location>
        <position position="24"/>
    </location>
</feature>
<feature type="modified residue" description="N6-acetyllysine; alternate" evidence="4">
    <location>
        <position position="24"/>
    </location>
</feature>
<feature type="modified residue" description="N6-butyryllysine; alternate" evidence="3">
    <location>
        <position position="24"/>
    </location>
</feature>
<feature type="modified residue" description="N6-crotonyllysine; alternate" evidence="4">
    <location>
        <position position="24"/>
    </location>
</feature>
<feature type="modified residue" description="N6-glutaryllysine; alternate" evidence="4">
    <location>
        <position position="24"/>
    </location>
</feature>
<feature type="modified residue" description="N6-lactoyllysine; alternate" evidence="4">
    <location>
        <position position="24"/>
    </location>
</feature>
<feature type="modified residue" description="N6-methyllysine; alternate" evidence="4">
    <location>
        <position position="24"/>
    </location>
</feature>
<feature type="modified residue" description="Citrulline" evidence="4">
    <location>
        <position position="27"/>
    </location>
</feature>
<feature type="modified residue" description="N6,N6,N6-trimethyllysine; alternate" evidence="4">
    <location>
        <position position="28"/>
    </location>
</feature>
<feature type="modified residue" description="N6,N6-dimethyllysine; alternate" evidence="4">
    <location>
        <position position="28"/>
    </location>
</feature>
<feature type="modified residue" description="N6-(2-hydroxyisobutyryl)lysine; alternate" evidence="2">
    <location>
        <position position="28"/>
    </location>
</feature>
<feature type="modified residue" description="N6-acetyllysine; alternate" evidence="4">
    <location>
        <position position="28"/>
    </location>
</feature>
<feature type="modified residue" description="N6-crotonyllysine; alternate" evidence="4">
    <location>
        <position position="28"/>
    </location>
</feature>
<feature type="modified residue" description="N6-glutaryllysine; alternate" evidence="4">
    <location>
        <position position="28"/>
    </location>
</feature>
<feature type="modified residue" description="N6-lactoyllysine; alternate" evidence="4">
    <location>
        <position position="28"/>
    </location>
</feature>
<feature type="modified residue" description="N6-methyllysine; alternate" evidence="4">
    <location>
        <position position="28"/>
    </location>
</feature>
<feature type="modified residue" description="ADP-ribosylserine; alternate" evidence="2">
    <location>
        <position position="29"/>
    </location>
</feature>
<feature type="modified residue" description="Phosphoserine; alternate; by AURKB, AURKC and RPS6KA5" evidence="6">
    <location>
        <position position="29"/>
    </location>
</feature>
<feature type="modified residue" description="Phosphoserine" evidence="4">
    <location>
        <position position="32"/>
    </location>
</feature>
<feature type="modified residue" description="N6,N6,N6-trimethyllysine; alternate" evidence="4">
    <location>
        <position position="37"/>
    </location>
</feature>
<feature type="modified residue" description="N6,N6-dimethyllysine; alternate" evidence="4">
    <location>
        <position position="37"/>
    </location>
</feature>
<feature type="modified residue" description="N6-(2-hydroxyisobutyryl)lysine; alternate" evidence="2">
    <location>
        <position position="37"/>
    </location>
</feature>
<feature type="modified residue" description="N6-acetyllysine; alternate" evidence="10">
    <location>
        <position position="37"/>
    </location>
</feature>
<feature type="modified residue" description="N6-methyllysine; alternate" evidence="4">
    <location>
        <position position="37"/>
    </location>
</feature>
<feature type="modified residue" description="N6-methyllysine" evidence="2">
    <location>
        <position position="38"/>
    </location>
</feature>
<feature type="modified residue" description="Phosphotyrosine" evidence="4">
    <location>
        <position position="42"/>
    </location>
</feature>
<feature type="modified residue" description="N6,N6,N6-trimethyllysine; alternate" evidence="4">
    <location>
        <position position="57"/>
    </location>
</feature>
<feature type="modified residue" description="N6-(2-hydroxyisobutyryl)lysine; alternate" evidence="2">
    <location>
        <position position="57"/>
    </location>
</feature>
<feature type="modified residue" description="N6-(beta-hydroxybutyryl)lysine; alternate" evidence="3">
    <location>
        <position position="57"/>
    </location>
</feature>
<feature type="modified residue" description="N6-acetyllysine; alternate" evidence="4">
    <location>
        <position position="57"/>
    </location>
</feature>
<feature type="modified residue" description="N6-crotonyllysine; alternate" evidence="4">
    <location>
        <position position="57"/>
    </location>
</feature>
<feature type="modified residue" description="N6-glutaryllysine; alternate" evidence="4">
    <location>
        <position position="57"/>
    </location>
</feature>
<feature type="modified residue" description="N6-lactoyllysine; alternate" evidence="5">
    <location>
        <position position="57"/>
    </location>
</feature>
<feature type="modified residue" description="N6-methyllysine; by EHMT2; alternate" evidence="4">
    <location>
        <position position="57"/>
    </location>
</feature>
<feature type="modified residue" description="N6-succinyllysine; alternate" evidence="4">
    <location>
        <position position="57"/>
    </location>
</feature>
<feature type="modified residue" description="Phosphoserine" evidence="4">
    <location>
        <position position="58"/>
    </location>
</feature>
<feature type="modified residue" description="N6-(2-hydroxyisobutyryl)lysine; alternate" evidence="2">
    <location>
        <position position="65"/>
    </location>
</feature>
<feature type="modified residue" description="N6-methyllysine; alternate" evidence="4">
    <location>
        <position position="65"/>
    </location>
</feature>
<feature type="modified residue" description="N6,N6,N6-trimethyllysine; alternate" evidence="5">
    <location>
        <position position="80"/>
    </location>
</feature>
<feature type="modified residue" description="N6,N6-dimethyllysine; alternate" evidence="4">
    <location>
        <position position="80"/>
    </location>
</feature>
<feature type="modified residue" description="N6-(2-hydroxyisobutyryl)lysine; alternate" evidence="2">
    <location>
        <position position="80"/>
    </location>
</feature>
<feature type="modified residue" description="N6-acetyllysine; alternate" evidence="4">
    <location>
        <position position="80"/>
    </location>
</feature>
<feature type="modified residue" description="N6-glutaryllysine; alternate" evidence="4">
    <location>
        <position position="80"/>
    </location>
</feature>
<feature type="modified residue" description="N6-lactoyllysine; alternate" evidence="4">
    <location>
        <position position="80"/>
    </location>
</feature>
<feature type="modified residue" description="N6-methyllysine; alternate" evidence="4">
    <location>
        <position position="80"/>
    </location>
</feature>
<feature type="modified residue" description="N6-succinyllysine; alternate" evidence="4">
    <location>
        <position position="80"/>
    </location>
</feature>
<feature type="modified residue" description="Phosphothreonine" evidence="4">
    <location>
        <position position="81"/>
    </location>
</feature>
<feature type="modified residue" description="Phosphoserine" evidence="4">
    <location>
        <position position="87"/>
    </location>
</feature>
<feature type="modified residue" description="Phosphothreonine" evidence="7">
    <location>
        <position position="108"/>
    </location>
</feature>
<feature type="modified residue" description="N6-acetyllysine; alternate" evidence="4">
    <location>
        <position position="116"/>
    </location>
</feature>
<feature type="modified residue" description="N6-glutaryllysine; alternate" evidence="4">
    <location>
        <position position="116"/>
    </location>
</feature>
<feature type="modified residue" description="N6-(2-hydroxyisobutyryl)lysine; alternate" evidence="2">
    <location>
        <position position="123"/>
    </location>
</feature>
<feature type="modified residue" description="N6-acetyllysine; alternate" evidence="4">
    <location>
        <position position="123"/>
    </location>
</feature>
<feature type="modified residue" description="N6-glutaryllysine; alternate" evidence="4">
    <location>
        <position position="123"/>
    </location>
</feature>
<feature type="modified residue" description="N6-methyllysine; alternate" evidence="4">
    <location>
        <position position="123"/>
    </location>
</feature>
<feature type="modified residue" description="N6-succinyllysine; alternate" evidence="4">
    <location>
        <position position="123"/>
    </location>
</feature>
<feature type="lipid moiety-binding region" description="N6-decanoyllysine" evidence="4">
    <location>
        <position position="19"/>
    </location>
</feature>
<feature type="mutagenesis site" description="Abolished dopaminylation by TGM2. Impaired regulation of relapse-related transcriptional plasticity in the reward system." evidence="11">
    <original>Q</original>
    <variation>A</variation>
    <location>
        <position position="6"/>
    </location>
</feature>
<proteinExistence type="evidence at protein level"/>
<organism>
    <name type="scientific">Rattus norvegicus</name>
    <name type="common">Rat</name>
    <dbReference type="NCBI Taxonomy" id="10116"/>
    <lineage>
        <taxon>Eukaryota</taxon>
        <taxon>Metazoa</taxon>
        <taxon>Chordata</taxon>
        <taxon>Craniata</taxon>
        <taxon>Vertebrata</taxon>
        <taxon>Euteleostomi</taxon>
        <taxon>Mammalia</taxon>
        <taxon>Eutheria</taxon>
        <taxon>Euarchontoglires</taxon>
        <taxon>Glires</taxon>
        <taxon>Rodentia</taxon>
        <taxon>Myomorpha</taxon>
        <taxon>Muroidea</taxon>
        <taxon>Muridae</taxon>
        <taxon>Murinae</taxon>
        <taxon>Rattus</taxon>
    </lineage>
</organism>
<sequence>MARTKQTARKSTGGKAPRKQLATKAARKSAPSTGGVKKPHRYRPGTVALREIRRYQKSTELLIRKLPFQRLVREIAQDFKTDLRFQSAAIGALQEASEAYLVGLFEDTNLCAIHAKRVTIMPKDIQLARRIRGERA</sequence>
<keyword id="KW-0007">Acetylation</keyword>
<keyword id="KW-0013">ADP-ribosylation</keyword>
<keyword id="KW-0158">Chromosome</keyword>
<keyword id="KW-0164">Citrullination</keyword>
<keyword id="KW-0238">DNA-binding</keyword>
<keyword id="KW-0379">Hydroxylation</keyword>
<keyword id="KW-0449">Lipoprotein</keyword>
<keyword id="KW-0488">Methylation</keyword>
<keyword id="KW-0544">Nucleosome core</keyword>
<keyword id="KW-0539">Nucleus</keyword>
<keyword id="KW-0597">Phosphoprotein</keyword>
<keyword id="KW-1185">Reference proteome</keyword>
<keyword id="KW-0832">Ubl conjugation</keyword>
<comment type="function">
    <text evidence="4">Variant histone H3 which replaces conventional H3 in a wide range of nucleosomes in active genes. Constitutes the predominant form of histone H3 in non-dividing cells and is incorporated into chromatin independently of DNA synthesis. Deposited at sites of nucleosomal displacement throughout transcribed genes, suggesting that it represents an epigenetic imprint of transcriptionally active chromatin. Nucleosomes wrap and compact DNA into chromatin, limiting DNA accessibility to the cellular machineries which require DNA as a template. Histones thereby play a central role in transcription regulation, DNA repair, DNA replication and chromosomal stability. DNA accessibility is regulated via a complex set of post-translational modifications of histones, also called histone code, and nucleosome remodeling.</text>
</comment>
<comment type="subunit">
    <text evidence="4">The nucleosome is a histone octamer containing two molecules each of H2A, H2B, H3 and H4 assembled in one H3-H4 heterotetramer and two H2A-H2B heterodimers. The octamer wraps approximately 147 bp of DNA. Interacts with HIRA, a chaperone required for its incorporation into nucleosomes. Interacts with ZMYND11; when trimethylated at 'Lys-36' (H3.3K36me3). Found in a co-chaperone complex with DNJC9, MCM2 and histone H3.3-H4 dimers (By similarity). Within the complex, interacts with DNJC9 (via C-terminus); the interaction is direct (By similarity). Interacts with ASF1A, MCM2, NASP and SPT2 (By similarity). Interacts with DAXX; the interaction is direct (By similarity). Interacts with NASP; NASP is a histone chaperone that stabilizes and maintains a soluble pool of Histone H3-H4 dimers (By similarity).</text>
</comment>
<comment type="subcellular location">
    <subcellularLocation>
        <location evidence="1">Nucleus</location>
    </subcellularLocation>
    <subcellularLocation>
        <location evidence="1">Chromosome</location>
    </subcellularLocation>
</comment>
<comment type="developmental stage">
    <text evidence="12">Expressed throughout the cell cycle independently of DNA synthesis. Levels increase from embryonic day 18 to postnatal day 10.</text>
</comment>
<comment type="domain">
    <text evidence="4">Specific interaction of trimethylated form at 'Lys-36' (H3.3K36me3) with ZMYND11 is mediated by the encapsulation of Ser-32 residue with a composite pocket formed by the tandem bromo-PWWP domains (By similarity). Interacts with ZMYND11; when trimethylated at 'Lys-36' (H3.3K36me3).</text>
</comment>
<comment type="PTM">
    <text evidence="4">Acetylation is generally linked to gene activation. Acetylation on Lys-10 (H3K9ac) impairs methylation at Arg-9 (H3R8me2s). Acetylation on Lys-19 (H3K18ac) and Lys-24 (H3K24ac) favors methylation at Arg-18 (H3R17me). Acetylation at Lys-123 (H3K122ac) by EP300/p300 plays a central role in chromatin structure: localizes at the surface of the histone octamer and stimulates transcription, possibly by promoting nucleosome instability.</text>
</comment>
<comment type="PTM">
    <text evidence="4">Citrullination at Arg-9 (H3R8ci) and/or Arg-18 (H3R17ci) by PADI4 impairs methylation and represses transcription.</text>
</comment>
<comment type="PTM">
    <text evidence="4">Asymmetric dimethylation at Arg-18 (H3R17me2a) by CARM1 is linked to gene activation. Symmetric dimethylation at Arg-9 (H3R8me2s) by PRMT5 is linked to gene repression. Asymmetric dimethylation at Arg-3 (H3R2me2a) by PRMT6 is linked to gene repression and is mutually exclusive with H3 Lys-5 methylation (H3K4me2 and H3K4me3). H3R2me2a is present at the 3' of genes regardless of their transcription state and is enriched on inactive promoters, while it is absent on active promoters.</text>
</comment>
<comment type="PTM">
    <text evidence="4">Specifically enriched in modifications associated with active chromatin such as methylation at Lys-5 (H3K4me), Lys-37 and Lys-80. Methylation at Lys-5 (H3K4me) facilitates subsequent acetylation of H3 and H4. Methylation at Lys-80 (H3K79me) is associated with DNA double-strand break (DSB) responses and is a specific target for TP53BP1. Methylation at Lys-10 (H3K9me) and Lys-28 (H3K27me), which are linked to gene repression, are underrepresented. Methylation at Lys-10 (H3K9me) is a specific target for HP1 proteins (CBX1, CBX3 and CBX5) and prevents subsequent phosphorylation at Ser-11 (H3S10ph) and acetylation of H3 and H4. Methylation at Lys-5 (H3K4me) and Lys-80 (H3K79me) require preliminary monoubiquitination of H2B at 'Lys-120'. Methylation at Lys-10 (H3K9me) and Lys-28 (H3K27me) are enriched in inactive X chromosome chromatin. Monomethylation at Lys-57 (H3K56me1) by EHMT2/G9A in G1 phase promotes interaction with PCNA and is required for DNA replication.</text>
</comment>
<comment type="PTM">
    <text evidence="4">Phosphorylated at Thr-4 (H3T3ph) by VRK1 (By similarity). Phosphorylated at Thr-4 (H3T3ph) by HASPIN during prophase and dephosphorylated during anaphase. Phosphorylation at Ser-11 (H3S10ph) by AURKB is crucial for chromosome condensation and cell-cycle progression during mitosis and meiosis. In addition phosphorylation at Ser-11 (H3S10ph) by RPS6KA4 and RPS6KA5 is important during interphase because it enables the transcription of genes following external stimulation, like mitogens, stress, growth factors or UV irradiation and result in the activation of genes, such as c-fos and c-jun. Phosphorylation at Ser-11 (H3S10ph), which is linked to gene activation, prevents methylation at Lys-10 (H3K9me) but facilitates acetylation of H3 and H4. Phosphorylation at Ser-11 (H3S10ph) by AURKB mediates the dissociation of HP1 proteins (CBX1, CBX3 and CBX5) from heterochromatin. Phosphorylation at Ser-11 (H3S10ph) is also an essential regulatory mechanism for neoplastic cell transformation. Phosphorylated at Ser-29 (H3S28ph) by MAP3K20 isoform 1, RPS6KA5 or AURKB during mitosis or upon ultraviolet B irradiation. Phosphorylation at Thr-7 (H3T6ph) by PRKCB is a specific tag for epigenetic transcriptional activation that prevents demethylation of Lys-5 (H3K4me) by LSD1/KDM1A. At centromeres, specifically phosphorylated at Thr-12 (H3T11ph) from prophase to early anaphase, by DAPK3 and PKN1. Phosphorylation at Thr-12 (H3T11ph) by PKN1 or isoform M2 of PKM (PKM2) is a specific tag for epigenetic transcriptional activation that promotes demethylation of Lys-10 (H3K9me) by KDM4C/JMJD2C. Phosphorylation at Tyr-42 (H3Y41ph) by JAK2 promotes exclusion of CBX5 (HP1 alpha) from chromatin. Phosphorylation on Ser-32 (H3S31ph) is specific to regions bordering centromeres in metaphase chromosomes.</text>
</comment>
<comment type="PTM">
    <text evidence="1 13">Ubiquitinated. Monoubiquitinated by RAG1 in lymphoid cells, monoubiquitination is required for V(D)J recombination (By similarity).</text>
</comment>
<comment type="PTM">
    <text evidence="4">Lysine deamination at Lys-5 (H3K4all) to form allysine is mediated by LOXL2. Allysine formation by LOXL2 only takes place on H3K4me3 and results in gene repression.</text>
</comment>
<comment type="PTM">
    <text evidence="4">Crotonylation (Kcr) is specifically present in male germ cells and marks testis-specific genes in post-meiotic cells, including X-linked genes that escape sex chromosome inactivation in haploid cells. Crotonylation marks active promoters and enhancers and confers resistance to transcriptional repressors. It is also associated with post-meiotically activated genes on autosomes.</text>
</comment>
<comment type="PTM">
    <text evidence="3">Butyrylation of histones marks active promoters and competes with histone acetylation. It is present during late spermatogenesis.</text>
</comment>
<comment type="PTM">
    <text evidence="4">Succinylation at Lys-80 (H3K79succ) by KAT2A takes place with a maximum frequency around the transcription start sites of genes. It gives a specific tag for epigenetic transcription activation. Desuccinylation at Lys-123 (H3K122succ) by SIRT7 in response to DNA damage promotes chromatin condensation and double-strand breaks (DSBs) repair.</text>
</comment>
<comment type="PTM">
    <text evidence="2">Serine ADP-ribosylation by PARP1 or PARP2 constitutes the primary form of ADP-ribosylation of proteins in response to DNA damage. Serine ADP-ribosylation at Ser-11 (H3S10ADPr) promotes recruitment of CHD1L. H3S10ADPr is mutually exclusive with phosphorylation at Ser-11 (H3S10ph) and impairs acetylation at Lys-10 (H3K9ac).</text>
</comment>
<comment type="PTM">
    <text evidence="4">Serotonylated by TGM2 at Gln-6 (H3Q5ser) during serotonergic neuron differentiation (By similarity). H3Q5ser is associated with trimethylation of Lys-5 (H3K4me3) and enhances general transcription factor IID (TFIID) complex-binding to H3K4me3, thereby facilitating transcription (By similarity).</text>
</comment>
<comment type="PTM">
    <text evidence="11">Dopaminylated by TGM2 at Gln-6 (H3Q5dop) in ventral tegmental area (VTA) neurons (PubMed:32273471). H3Q5dop mediates neurotransmission-independent role of nuclear dopamine by regulating relapse-related transcriptional plasticity in the reward system (PubMed:32273471).</text>
</comment>
<comment type="PTM">
    <text evidence="4">Lactylated in macrophages by EP300/P300 by using lactoyl-CoA directly derived from endogenous or exogenous lactate, leading to stimulates gene transcription.</text>
</comment>
<comment type="similarity">
    <text evidence="14">Belongs to the histone H3 family.</text>
</comment>
<evidence type="ECO:0000250" key="1"/>
<evidence type="ECO:0000250" key="2">
    <source>
        <dbReference type="UniProtKB" id="P68431"/>
    </source>
</evidence>
<evidence type="ECO:0000250" key="3">
    <source>
        <dbReference type="UniProtKB" id="P68433"/>
    </source>
</evidence>
<evidence type="ECO:0000250" key="4">
    <source>
        <dbReference type="UniProtKB" id="P84243"/>
    </source>
</evidence>
<evidence type="ECO:0000250" key="5">
    <source>
        <dbReference type="UniProtKB" id="P84244"/>
    </source>
</evidence>
<evidence type="ECO:0000250" key="6">
    <source>
        <dbReference type="UniProtKB" id="Q5E9F8"/>
    </source>
</evidence>
<evidence type="ECO:0000250" key="7">
    <source>
        <dbReference type="UniProtKB" id="Q71DI3"/>
    </source>
</evidence>
<evidence type="ECO:0000256" key="8">
    <source>
        <dbReference type="SAM" id="MobiDB-lite"/>
    </source>
</evidence>
<evidence type="ECO:0000269" key="9">
    <source>
    </source>
</evidence>
<evidence type="ECO:0000269" key="10">
    <source>
    </source>
</evidence>
<evidence type="ECO:0000269" key="11">
    <source>
    </source>
</evidence>
<evidence type="ECO:0000269" key="12">
    <source>
    </source>
</evidence>
<evidence type="ECO:0000269" key="13">
    <source>
    </source>
</evidence>
<evidence type="ECO:0000305" key="14"/>
<evidence type="ECO:0000312" key="15">
    <source>
        <dbReference type="RGD" id="621095"/>
    </source>
</evidence>